<name>LEUC_YERPG</name>
<protein>
    <recommendedName>
        <fullName evidence="1">3-isopropylmalate dehydratase large subunit</fullName>
        <ecNumber evidence="1">4.2.1.33</ecNumber>
    </recommendedName>
    <alternativeName>
        <fullName evidence="1">Alpha-IPM isomerase</fullName>
        <shortName evidence="1">IPMI</shortName>
    </alternativeName>
    <alternativeName>
        <fullName evidence="1">Isopropylmalate isomerase</fullName>
    </alternativeName>
</protein>
<comment type="function">
    <text evidence="1">Catalyzes the isomerization between 2-isopropylmalate and 3-isopropylmalate, via the formation of 2-isopropylmaleate.</text>
</comment>
<comment type="catalytic activity">
    <reaction evidence="1">
        <text>(2R,3S)-3-isopropylmalate = (2S)-2-isopropylmalate</text>
        <dbReference type="Rhea" id="RHEA:32287"/>
        <dbReference type="ChEBI" id="CHEBI:1178"/>
        <dbReference type="ChEBI" id="CHEBI:35121"/>
        <dbReference type="EC" id="4.2.1.33"/>
    </reaction>
</comment>
<comment type="cofactor">
    <cofactor evidence="1">
        <name>[4Fe-4S] cluster</name>
        <dbReference type="ChEBI" id="CHEBI:49883"/>
    </cofactor>
    <text evidence="1">Binds 1 [4Fe-4S] cluster per subunit.</text>
</comment>
<comment type="pathway">
    <text evidence="1">Amino-acid biosynthesis; L-leucine biosynthesis; L-leucine from 3-methyl-2-oxobutanoate: step 2/4.</text>
</comment>
<comment type="subunit">
    <text evidence="1">Heterodimer of LeuC and LeuD.</text>
</comment>
<comment type="similarity">
    <text evidence="1">Belongs to the aconitase/IPM isomerase family. LeuC type 1 subfamily.</text>
</comment>
<dbReference type="EC" id="4.2.1.33" evidence="1"/>
<dbReference type="EMBL" id="CP000901">
    <property type="protein sequence ID" value="ABX86055.1"/>
    <property type="molecule type" value="Genomic_DNA"/>
</dbReference>
<dbReference type="RefSeq" id="WP_002210455.1">
    <property type="nucleotide sequence ID" value="NZ_CP009935.1"/>
</dbReference>
<dbReference type="SMR" id="A9R144"/>
<dbReference type="GeneID" id="57974081"/>
<dbReference type="KEGG" id="ypg:YpAngola_A2938"/>
<dbReference type="PATRIC" id="fig|349746.12.peg.3984"/>
<dbReference type="UniPathway" id="UPA00048">
    <property type="reaction ID" value="UER00071"/>
</dbReference>
<dbReference type="GO" id="GO:0003861">
    <property type="term" value="F:3-isopropylmalate dehydratase activity"/>
    <property type="evidence" value="ECO:0007669"/>
    <property type="project" value="UniProtKB-UniRule"/>
</dbReference>
<dbReference type="GO" id="GO:0051539">
    <property type="term" value="F:4 iron, 4 sulfur cluster binding"/>
    <property type="evidence" value="ECO:0007669"/>
    <property type="project" value="UniProtKB-KW"/>
</dbReference>
<dbReference type="GO" id="GO:0046872">
    <property type="term" value="F:metal ion binding"/>
    <property type="evidence" value="ECO:0007669"/>
    <property type="project" value="UniProtKB-KW"/>
</dbReference>
<dbReference type="GO" id="GO:0009098">
    <property type="term" value="P:L-leucine biosynthetic process"/>
    <property type="evidence" value="ECO:0007669"/>
    <property type="project" value="UniProtKB-UniRule"/>
</dbReference>
<dbReference type="CDD" id="cd01583">
    <property type="entry name" value="IPMI"/>
    <property type="match status" value="1"/>
</dbReference>
<dbReference type="FunFam" id="3.30.499.10:FF:000006">
    <property type="entry name" value="3-isopropylmalate dehydratase large subunit"/>
    <property type="match status" value="1"/>
</dbReference>
<dbReference type="FunFam" id="3.30.499.10:FF:000007">
    <property type="entry name" value="3-isopropylmalate dehydratase large subunit"/>
    <property type="match status" value="1"/>
</dbReference>
<dbReference type="Gene3D" id="3.30.499.10">
    <property type="entry name" value="Aconitase, domain 3"/>
    <property type="match status" value="2"/>
</dbReference>
<dbReference type="HAMAP" id="MF_01026">
    <property type="entry name" value="LeuC_type1"/>
    <property type="match status" value="1"/>
</dbReference>
<dbReference type="InterPro" id="IPR004430">
    <property type="entry name" value="3-IsopropMal_deHydase_lsu"/>
</dbReference>
<dbReference type="InterPro" id="IPR015931">
    <property type="entry name" value="Acnase/IPM_dHydase_lsu_aba_1/3"/>
</dbReference>
<dbReference type="InterPro" id="IPR001030">
    <property type="entry name" value="Acoase/IPM_deHydtase_lsu_aba"/>
</dbReference>
<dbReference type="InterPro" id="IPR018136">
    <property type="entry name" value="Aconitase_4Fe-4S_BS"/>
</dbReference>
<dbReference type="InterPro" id="IPR036008">
    <property type="entry name" value="Aconitase_4Fe-4S_dom"/>
</dbReference>
<dbReference type="InterPro" id="IPR050067">
    <property type="entry name" value="IPM_dehydratase_rel_enz"/>
</dbReference>
<dbReference type="InterPro" id="IPR033941">
    <property type="entry name" value="IPMI_cat"/>
</dbReference>
<dbReference type="NCBIfam" id="TIGR00170">
    <property type="entry name" value="leuC"/>
    <property type="match status" value="1"/>
</dbReference>
<dbReference type="NCBIfam" id="NF004016">
    <property type="entry name" value="PRK05478.1"/>
    <property type="match status" value="1"/>
</dbReference>
<dbReference type="NCBIfam" id="NF009116">
    <property type="entry name" value="PRK12466.1"/>
    <property type="match status" value="1"/>
</dbReference>
<dbReference type="PANTHER" id="PTHR43822:SF9">
    <property type="entry name" value="3-ISOPROPYLMALATE DEHYDRATASE"/>
    <property type="match status" value="1"/>
</dbReference>
<dbReference type="PANTHER" id="PTHR43822">
    <property type="entry name" value="HOMOACONITASE, MITOCHONDRIAL-RELATED"/>
    <property type="match status" value="1"/>
</dbReference>
<dbReference type="Pfam" id="PF00330">
    <property type="entry name" value="Aconitase"/>
    <property type="match status" value="1"/>
</dbReference>
<dbReference type="PRINTS" id="PR00415">
    <property type="entry name" value="ACONITASE"/>
</dbReference>
<dbReference type="SUPFAM" id="SSF53732">
    <property type="entry name" value="Aconitase iron-sulfur domain"/>
    <property type="match status" value="1"/>
</dbReference>
<dbReference type="PROSITE" id="PS00450">
    <property type="entry name" value="ACONITASE_1"/>
    <property type="match status" value="1"/>
</dbReference>
<dbReference type="PROSITE" id="PS01244">
    <property type="entry name" value="ACONITASE_2"/>
    <property type="match status" value="1"/>
</dbReference>
<proteinExistence type="inferred from homology"/>
<gene>
    <name evidence="1" type="primary">leuC</name>
    <name type="ordered locus">YpAngola_A2938</name>
</gene>
<organism>
    <name type="scientific">Yersinia pestis bv. Antiqua (strain Angola)</name>
    <dbReference type="NCBI Taxonomy" id="349746"/>
    <lineage>
        <taxon>Bacteria</taxon>
        <taxon>Pseudomonadati</taxon>
        <taxon>Pseudomonadota</taxon>
        <taxon>Gammaproteobacteria</taxon>
        <taxon>Enterobacterales</taxon>
        <taxon>Yersiniaceae</taxon>
        <taxon>Yersinia</taxon>
    </lineage>
</organism>
<reference key="1">
    <citation type="journal article" date="2010" name="J. Bacteriol.">
        <title>Genome sequence of the deep-rooted Yersinia pestis strain Angola reveals new insights into the evolution and pangenome of the plague bacterium.</title>
        <authorList>
            <person name="Eppinger M."/>
            <person name="Worsham P.L."/>
            <person name="Nikolich M.P."/>
            <person name="Riley D.R."/>
            <person name="Sebastian Y."/>
            <person name="Mou S."/>
            <person name="Achtman M."/>
            <person name="Lindler L.E."/>
            <person name="Ravel J."/>
        </authorList>
    </citation>
    <scope>NUCLEOTIDE SEQUENCE [LARGE SCALE GENOMIC DNA]</scope>
    <source>
        <strain>Angola</strain>
    </source>
</reference>
<sequence length="476" mass="50589">MGTTSSQSKTLYQKLYDAHIVHEAPNETPLLYIDRHLVHEVTSPQAFDGLRAMGRPVRQPGKTFATMDHNVSTQTKDINASGEMARIQMQELIKNCAEFGVSLYDLNHPFQGIVHVIGPEQGMTLPGMTIVCGDSHTATHGAFGSLAFGIGTSEVEHVLATQTLKQGRAKTMRIEVNGTVGAGITAKDIVLAIIGKTGSAGGTGHVVEFCGSAIEALSMEGRMTLCNMAIEMGAKAGLVAPDDTTFAYLKGRQFAPTGEQWEQGVAYWRTLKSDADAQFDTIVTLDAADIAPQVTWGTNPGQVIAVNQIIPAPESFSDPVERASAEKALAYMDLRPGIKLTEVAIDKVFIGSCTNSRIEDLRAAAAIAQGRKVAKGVQAIVVPGSGPVKAQAEAEGLDKIFIAAGFEWRLPGCSMCLAMNNDRLEPGERCASTSNRNFEGRQGRGGRTHLVSPAMAAAAAVSGHFADVRELSATTH</sequence>
<feature type="chain" id="PRO_1000135724" description="3-isopropylmalate dehydratase large subunit">
    <location>
        <begin position="1"/>
        <end position="476"/>
    </location>
</feature>
<feature type="binding site" evidence="1">
    <location>
        <position position="353"/>
    </location>
    <ligand>
        <name>[4Fe-4S] cluster</name>
        <dbReference type="ChEBI" id="CHEBI:49883"/>
    </ligand>
</feature>
<feature type="binding site" evidence="1">
    <location>
        <position position="413"/>
    </location>
    <ligand>
        <name>[4Fe-4S] cluster</name>
        <dbReference type="ChEBI" id="CHEBI:49883"/>
    </ligand>
</feature>
<feature type="binding site" evidence="1">
    <location>
        <position position="416"/>
    </location>
    <ligand>
        <name>[4Fe-4S] cluster</name>
        <dbReference type="ChEBI" id="CHEBI:49883"/>
    </ligand>
</feature>
<evidence type="ECO:0000255" key="1">
    <source>
        <dbReference type="HAMAP-Rule" id="MF_01026"/>
    </source>
</evidence>
<keyword id="KW-0004">4Fe-4S</keyword>
<keyword id="KW-0028">Amino-acid biosynthesis</keyword>
<keyword id="KW-0100">Branched-chain amino acid biosynthesis</keyword>
<keyword id="KW-0408">Iron</keyword>
<keyword id="KW-0411">Iron-sulfur</keyword>
<keyword id="KW-0432">Leucine biosynthesis</keyword>
<keyword id="KW-0456">Lyase</keyword>
<keyword id="KW-0479">Metal-binding</keyword>
<accession>A9R144</accession>